<gene>
    <name type="primary">L3HYPDH</name>
</gene>
<dbReference type="EC" id="4.2.1.77"/>
<dbReference type="EMBL" id="BC104573">
    <property type="protein sequence ID" value="AAI04574.1"/>
    <property type="molecule type" value="mRNA"/>
</dbReference>
<dbReference type="RefSeq" id="NP_001029558.1">
    <property type="nucleotide sequence ID" value="NM_001034386.1"/>
</dbReference>
<dbReference type="SMR" id="Q3SX04"/>
<dbReference type="FunCoup" id="Q3SX04">
    <property type="interactions" value="247"/>
</dbReference>
<dbReference type="STRING" id="9913.ENSBTAP00000004371"/>
<dbReference type="PaxDb" id="9913-ENSBTAP00000004371"/>
<dbReference type="GeneID" id="510525"/>
<dbReference type="KEGG" id="bta:510525"/>
<dbReference type="CTD" id="112849"/>
<dbReference type="VEuPathDB" id="HostDB:ENSBTAG00000030824"/>
<dbReference type="eggNOG" id="ENOG502QRPF">
    <property type="taxonomic scope" value="Eukaryota"/>
</dbReference>
<dbReference type="HOGENOM" id="CLU_036729_0_1_1"/>
<dbReference type="InParanoid" id="Q3SX04"/>
<dbReference type="OMA" id="SHVLWTG"/>
<dbReference type="OrthoDB" id="6409228at2759"/>
<dbReference type="TreeFam" id="TF329167"/>
<dbReference type="Proteomes" id="UP000009136">
    <property type="component" value="Chromosome 10"/>
</dbReference>
<dbReference type="Bgee" id="ENSBTAG00000030824">
    <property type="expression patterns" value="Expressed in biceps femoris and 103 other cell types or tissues"/>
</dbReference>
<dbReference type="GO" id="GO:0016836">
    <property type="term" value="F:hydro-lyase activity"/>
    <property type="evidence" value="ECO:0000250"/>
    <property type="project" value="UniProtKB"/>
</dbReference>
<dbReference type="GO" id="GO:0050346">
    <property type="term" value="F:trans-L-3-hydroxyproline dehydratase activity"/>
    <property type="evidence" value="ECO:0007669"/>
    <property type="project" value="UniProtKB-EC"/>
</dbReference>
<dbReference type="FunFam" id="3.10.310.10:FF:000007">
    <property type="entry name" value="Trans-L-3-hydroxyproline dehydratase"/>
    <property type="match status" value="1"/>
</dbReference>
<dbReference type="Gene3D" id="3.10.310.10">
    <property type="entry name" value="Diaminopimelate Epimerase, Chain A, domain 1"/>
    <property type="match status" value="2"/>
</dbReference>
<dbReference type="InterPro" id="IPR008794">
    <property type="entry name" value="Pro_racemase_fam"/>
</dbReference>
<dbReference type="PANTHER" id="PTHR33442">
    <property type="entry name" value="TRANS-3-HYDROXY-L-PROLINE DEHYDRATASE"/>
    <property type="match status" value="1"/>
</dbReference>
<dbReference type="PANTHER" id="PTHR33442:SF1">
    <property type="entry name" value="TRANS-3-HYDROXY-L-PROLINE DEHYDRATASE"/>
    <property type="match status" value="1"/>
</dbReference>
<dbReference type="Pfam" id="PF05544">
    <property type="entry name" value="Pro_racemase"/>
    <property type="match status" value="1"/>
</dbReference>
<dbReference type="PIRSF" id="PIRSF029792">
    <property type="entry name" value="Pro_racemase"/>
    <property type="match status" value="1"/>
</dbReference>
<dbReference type="SFLD" id="SFLDS00028">
    <property type="entry name" value="Proline_Racemase"/>
    <property type="match status" value="1"/>
</dbReference>
<dbReference type="SUPFAM" id="SSF54506">
    <property type="entry name" value="Diaminopimelate epimerase-like"/>
    <property type="match status" value="1"/>
</dbReference>
<protein>
    <recommendedName>
        <fullName>Trans-L-3-hydroxyproline dehydratase</fullName>
        <ecNumber>4.2.1.77</ecNumber>
    </recommendedName>
    <alternativeName>
        <fullName>Trans-3-hydroxy-L-proline dehydratase</fullName>
    </alternativeName>
</protein>
<keyword id="KW-0456">Lyase</keyword>
<keyword id="KW-1185">Reference proteome</keyword>
<proteinExistence type="evidence at transcript level"/>
<sequence length="354" mass="37957">MAGPLTVPWMPPHDPGTPALSVVDMHTGGEPLRIVLAGCPEVVGPTLLAKRRYMRQHLDHVRRRLMFEPRGHRDMYGAVLVPSELPDAHLGVLFLNNEGYSSMCGHAVLALGRFALDFGLVPAPPSDAQEALVNIHCPCGLVAAFVECEGCRSRGPVRFHSVPAFVLATDFLVDVPGRGKVVVDIAYGGAFYAFVSAEKLGLDVCSAKMGDLVAAASAVTEAVKAQFKISHPDSEDLAFLYGTILTDGKDTYNEEPTTNICVFADEQVDRSPTGSGVTARIALQYHKGLLELNQTRAFKSSATGSVFTGKAVREAKCGDFKAVIVEVSGQAHYTGTASFIVEDDDPLRDGFLLK</sequence>
<evidence type="ECO:0000250" key="1"/>
<evidence type="ECO:0000305" key="2"/>
<reference key="1">
    <citation type="submission" date="2005-09" db="EMBL/GenBank/DDBJ databases">
        <authorList>
            <consortium name="NIH - Mammalian Gene Collection (MGC) project"/>
        </authorList>
    </citation>
    <scope>NUCLEOTIDE SEQUENCE [LARGE SCALE MRNA]</scope>
    <source>
        <strain>Hereford</strain>
        <tissue>Uterus</tissue>
    </source>
</reference>
<accession>Q3SX04</accession>
<comment type="function">
    <text evidence="1">Catalyzes the dehydration of trans-3-hydroxy-L-proline to Delta(1)-pyrroline-2-carboxylate (Pyr2C).</text>
</comment>
<comment type="catalytic activity">
    <reaction>
        <text>trans-3-hydroxy-L-proline = 1-pyrroline-2-carboxylate + H2O</text>
        <dbReference type="Rhea" id="RHEA:10320"/>
        <dbReference type="ChEBI" id="CHEBI:15377"/>
        <dbReference type="ChEBI" id="CHEBI:39785"/>
        <dbReference type="ChEBI" id="CHEBI:57938"/>
        <dbReference type="EC" id="4.2.1.77"/>
    </reaction>
</comment>
<comment type="subunit">
    <text evidence="1">Homodimer.</text>
</comment>
<comment type="miscellaneous">
    <text evidence="1">In contrast to the T.cruzi proline racemase enzyme, lacks the conserved Cys at position 273 which is replaced by a Thr residue, transforming the racemase activity into dehydratase activity.</text>
</comment>
<comment type="similarity">
    <text evidence="2">Belongs to the proline racemase family.</text>
</comment>
<organism>
    <name type="scientific">Bos taurus</name>
    <name type="common">Bovine</name>
    <dbReference type="NCBI Taxonomy" id="9913"/>
    <lineage>
        <taxon>Eukaryota</taxon>
        <taxon>Metazoa</taxon>
        <taxon>Chordata</taxon>
        <taxon>Craniata</taxon>
        <taxon>Vertebrata</taxon>
        <taxon>Euteleostomi</taxon>
        <taxon>Mammalia</taxon>
        <taxon>Eutheria</taxon>
        <taxon>Laurasiatheria</taxon>
        <taxon>Artiodactyla</taxon>
        <taxon>Ruminantia</taxon>
        <taxon>Pecora</taxon>
        <taxon>Bovidae</taxon>
        <taxon>Bovinae</taxon>
        <taxon>Bos</taxon>
    </lineage>
</organism>
<feature type="chain" id="PRO_0000288948" description="Trans-L-3-hydroxyproline dehydratase">
    <location>
        <begin position="1"/>
        <end position="354"/>
    </location>
</feature>
<feature type="active site" description="Proton acceptor" evidence="1">
    <location>
        <position position="104"/>
    </location>
</feature>
<feature type="binding site" evidence="1">
    <location>
        <begin position="105"/>
        <end position="106"/>
    </location>
    <ligand>
        <name>substrate</name>
    </ligand>
</feature>
<feature type="binding site" evidence="1">
    <location>
        <position position="269"/>
    </location>
    <ligand>
        <name>substrate</name>
    </ligand>
</feature>
<feature type="binding site" evidence="1">
    <location>
        <begin position="274"/>
        <end position="275"/>
    </location>
    <ligand>
        <name>substrate</name>
    </ligand>
</feature>
<name>T3HPD_BOVIN</name>